<sequence>AVGPVADNTITDAATSPDGFSRQAVVVNGVTPGPLVAGNIGDRFQLNVIDNLTNHTMLKTTSVHWHGFFQQGTNWADGPAFINQCPISPGHSFLYDFQVPNQAGTFWYHSHLSTQYCDGLRGPFVVYDPNDPHASRYDVDNDDTVITLADWYHTAAKLGPRFPAGADATLINGKGRAPSDTSAELSVIKVTKGKRYRFRLVSLSCDPNFTFSIDGHNLTIIEVDSSNSQPLSVDSIQIFAAQRYSFVLNANQAVDNYWIRANPNFGNVGFNGGINSAILRYDGAPAVEPTTNQTTSVKPLNEVNLHPLVSTPVPGSPSSGGVDKAINMAFNFNGSNFFINGASFVPPSVPVLLQILSGAQTAQDLLPSGSVYVLPSNASIEISFPATAAAPGAPHPFHLHGHTFAVVRSAGSTVYNYSNPIFRDVVSTGTPAAGDNVTIRFLTNNPGPWFLHCHIDFHLEGGFAVVQAEDVPDVKATNPVPQAWSDLCPTYDANAPSDQ</sequence>
<comment type="function">
    <text evidence="3 4 8">Lignin degradation and detoxification of lignin-derived products.</text>
</comment>
<comment type="catalytic activity">
    <reaction evidence="3 4">
        <text>4 hydroquinone + O2 = 4 benzosemiquinone + 2 H2O</text>
        <dbReference type="Rhea" id="RHEA:11276"/>
        <dbReference type="ChEBI" id="CHEBI:15377"/>
        <dbReference type="ChEBI" id="CHEBI:15379"/>
        <dbReference type="ChEBI" id="CHEBI:17594"/>
        <dbReference type="ChEBI" id="CHEBI:17977"/>
        <dbReference type="EC" id="1.10.3.2"/>
    </reaction>
</comment>
<comment type="cofactor">
    <cofactor evidence="3 4">
        <name>Cu cation</name>
        <dbReference type="ChEBI" id="CHEBI:23378"/>
    </cofactor>
    <text evidence="3 4">Binds 4 Cu cations per monomer.</text>
</comment>
<comment type="subcellular location">
    <subcellularLocation>
        <location evidence="3 4">Secreted</location>
    </subcellularLocation>
</comment>
<comment type="similarity">
    <text evidence="2">Belongs to the multicopper oxidase family.</text>
</comment>
<name>LAC1_TRAMX</name>
<dbReference type="EC" id="1.10.3.2" evidence="3 4"/>
<dbReference type="PDB" id="2H5U">
    <property type="method" value="X-ray"/>
    <property type="resolution" value="1.90 A"/>
    <property type="chains" value="A=2-499"/>
</dbReference>
<dbReference type="PDB" id="3DIV">
    <property type="method" value="X-ray"/>
    <property type="resolution" value="1.76 A"/>
    <property type="chains" value="A=1-499"/>
</dbReference>
<dbReference type="PDBsum" id="2H5U"/>
<dbReference type="PDBsum" id="3DIV"/>
<dbReference type="SMR" id="D0VWU3"/>
<dbReference type="iPTMnet" id="D0VWU3"/>
<dbReference type="EvolutionaryTrace" id="D0VWU3"/>
<dbReference type="GO" id="GO:0005576">
    <property type="term" value="C:extracellular region"/>
    <property type="evidence" value="ECO:0000314"/>
    <property type="project" value="UniProtKB"/>
</dbReference>
<dbReference type="GO" id="GO:0005507">
    <property type="term" value="F:copper ion binding"/>
    <property type="evidence" value="ECO:0000314"/>
    <property type="project" value="UniProtKB"/>
</dbReference>
<dbReference type="GO" id="GO:0052716">
    <property type="term" value="F:hydroquinone:oxygen oxidoreductase activity"/>
    <property type="evidence" value="ECO:0007669"/>
    <property type="project" value="UniProtKB-EC"/>
</dbReference>
<dbReference type="GO" id="GO:0016491">
    <property type="term" value="F:oxidoreductase activity"/>
    <property type="evidence" value="ECO:0000314"/>
    <property type="project" value="UniProtKB"/>
</dbReference>
<dbReference type="GO" id="GO:0046274">
    <property type="term" value="P:lignin catabolic process"/>
    <property type="evidence" value="ECO:0000304"/>
    <property type="project" value="UniProtKB"/>
</dbReference>
<dbReference type="CDD" id="cd13882">
    <property type="entry name" value="CuRO_2_Tv-LCC_like"/>
    <property type="match status" value="1"/>
</dbReference>
<dbReference type="CDD" id="cd13903">
    <property type="entry name" value="CuRO_3_Tv-LCC_like"/>
    <property type="match status" value="1"/>
</dbReference>
<dbReference type="FunFam" id="2.60.40.420:FF:000045">
    <property type="entry name" value="Laccase 2"/>
    <property type="match status" value="1"/>
</dbReference>
<dbReference type="FunFam" id="2.60.40.420:FF:000125">
    <property type="entry name" value="Laccase 2"/>
    <property type="match status" value="1"/>
</dbReference>
<dbReference type="FunFam" id="2.60.40.420:FF:000112">
    <property type="entry name" value="Laccase B"/>
    <property type="match status" value="1"/>
</dbReference>
<dbReference type="Gene3D" id="2.60.40.420">
    <property type="entry name" value="Cupredoxins - blue copper proteins"/>
    <property type="match status" value="3"/>
</dbReference>
<dbReference type="InterPro" id="IPR011707">
    <property type="entry name" value="Cu-oxidase-like_N"/>
</dbReference>
<dbReference type="InterPro" id="IPR001117">
    <property type="entry name" value="Cu-oxidase_2nd"/>
</dbReference>
<dbReference type="InterPro" id="IPR011706">
    <property type="entry name" value="Cu-oxidase_C"/>
</dbReference>
<dbReference type="InterPro" id="IPR045087">
    <property type="entry name" value="Cu-oxidase_fam"/>
</dbReference>
<dbReference type="InterPro" id="IPR033138">
    <property type="entry name" value="Cu_oxidase_CS"/>
</dbReference>
<dbReference type="InterPro" id="IPR008972">
    <property type="entry name" value="Cupredoxin"/>
</dbReference>
<dbReference type="PANTHER" id="PTHR11709:SF511">
    <property type="entry name" value="LACCASE"/>
    <property type="match status" value="1"/>
</dbReference>
<dbReference type="PANTHER" id="PTHR11709">
    <property type="entry name" value="MULTI-COPPER OXIDASE"/>
    <property type="match status" value="1"/>
</dbReference>
<dbReference type="Pfam" id="PF00394">
    <property type="entry name" value="Cu-oxidase"/>
    <property type="match status" value="1"/>
</dbReference>
<dbReference type="Pfam" id="PF07731">
    <property type="entry name" value="Cu-oxidase_2"/>
    <property type="match status" value="1"/>
</dbReference>
<dbReference type="Pfam" id="PF07732">
    <property type="entry name" value="Cu-oxidase_3"/>
    <property type="match status" value="1"/>
</dbReference>
<dbReference type="SUPFAM" id="SSF49503">
    <property type="entry name" value="Cupredoxins"/>
    <property type="match status" value="3"/>
</dbReference>
<dbReference type="PROSITE" id="PS00079">
    <property type="entry name" value="MULTICOPPER_OXIDASE1"/>
    <property type="match status" value="1"/>
</dbReference>
<keyword id="KW-0002">3D-structure</keyword>
<keyword id="KW-0186">Copper</keyword>
<keyword id="KW-1015">Disulfide bond</keyword>
<keyword id="KW-0325">Glycoprotein</keyword>
<keyword id="KW-0439">Lignin degradation</keyword>
<keyword id="KW-0479">Metal-binding</keyword>
<keyword id="KW-0944">Nitration</keyword>
<keyword id="KW-0560">Oxidoreductase</keyword>
<keyword id="KW-0677">Repeat</keyword>
<keyword id="KW-0964">Secreted</keyword>
<proteinExistence type="evidence at protein level"/>
<reference evidence="8" key="1">
    <citation type="journal article" date="2006" name="Acta Crystallogr. F">
        <title>Purification, crystallization and preliminary X-ray study of the fungal laccase from Cerrena maxima.</title>
        <authorList>
            <person name="Lyashenko A.V."/>
            <person name="Zhukhlistova N.E."/>
            <person name="Gabdoulkhakov A.G."/>
            <person name="Zhukova Y.N."/>
            <person name="Voelter W."/>
            <person name="Zaitsev V.N."/>
            <person name="Bento I."/>
            <person name="Stepanova E.V."/>
            <person name="Kachalova G.S."/>
            <person name="Koroleva O.V."/>
            <person name="Cherkashyn E.A."/>
            <person name="Tishkov V.I."/>
            <person name="Lamzin V.S."/>
            <person name="Schirwitz K."/>
            <person name="Morgunova E.Y."/>
            <person name="Betzel C."/>
            <person name="Lindley P.F."/>
            <person name="Mikhailov A.M."/>
        </authorList>
    </citation>
    <scope>CRYSTALLIZATION</scope>
    <scope>PRELIMINARY X-RAY CRYSTALLOGRAPHY</scope>
    <scope>CATALYTIC ACTIVITY</scope>
    <scope>COFACTOR</scope>
    <scope>SUBCELLULAR LOCATION</scope>
    <scope>NITRATION AT TYR-196 AND TYR-372</scope>
    <scope>GLYCOSYLATION AT ASN-54; ASN-217 AND ASN-436</scope>
    <scope>DISULFIDE BONDS</scope>
    <source>
        <strain evidence="4">0275</strain>
    </source>
</reference>
<reference evidence="8" key="2">
    <citation type="journal article" date="2006" name="J. Biol. Inorg. Chem.">
        <title>X-ray structural studies of the fungal laccase from Cerrena maxima.</title>
        <authorList>
            <person name="Lyashenko A.V."/>
            <person name="Bento I."/>
            <person name="Zaitsev V.N."/>
            <person name="Zhukhlistova N.E."/>
            <person name="Zhukova Y.N."/>
            <person name="Gabdoulkhakov A.G."/>
            <person name="Morgunova E.Y."/>
            <person name="Voelter W."/>
            <person name="Kachalova G.S."/>
            <person name="Stepanova E.V."/>
            <person name="Koroleva O.V."/>
            <person name="Lamzin V.S."/>
            <person name="Tishkov V.I."/>
            <person name="Betzel C."/>
            <person name="Lindley P.F."/>
            <person name="Mikhailov A.M."/>
        </authorList>
    </citation>
    <scope>X-RAY CRYSTALLOGRAPHY (1.9 ANGSTROMS)</scope>
    <scope>FUNCTION</scope>
    <scope>CATALYTIC ACTIVITY</scope>
    <scope>COFACTOR</scope>
    <scope>SUBCELLULAR LOCATION</scope>
    <scope>NITRATION AT TYR-196 AND TYR-372</scope>
    <scope>GLYCOSYLATION AT ASN-54; ASN-217; ASN-333 AND ASN-436</scope>
    <scope>COPPER-BINDING SITES</scope>
    <scope>DISULFIDE BONDS</scope>
    <source>
        <strain evidence="3">0275</strain>
    </source>
</reference>
<reference evidence="8 9" key="3">
    <citation type="submission" date="2008-06" db="PDB data bank">
        <authorList>
            <person name="Lyashenko A.V."/>
            <person name="Zhukova Y.N."/>
            <person name="Mikhailov A.M."/>
        </authorList>
    </citation>
    <scope>X-RAY CRYSTALLOGRAPHY (1.76 ANGSTROMS)</scope>
    <scope>COPPER-BINDING SITES</scope>
    <scope>NITRATION AT TYR-196 AND TYR-372</scope>
    <scope>GLYCOSYLATION AT ASN-54 AND ASN-217</scope>
    <scope>DISULFIDE BONDS</scope>
</reference>
<evidence type="ECO:0000250" key="1">
    <source>
        <dbReference type="UniProtKB" id="Q12718"/>
    </source>
</evidence>
<evidence type="ECO:0000255" key="2"/>
<evidence type="ECO:0000269" key="3">
    <source>
    </source>
</evidence>
<evidence type="ECO:0000269" key="4">
    <source>
    </source>
</evidence>
<evidence type="ECO:0000269" key="5">
    <source ref="3"/>
</evidence>
<evidence type="ECO:0000303" key="6">
    <source>
    </source>
</evidence>
<evidence type="ECO:0000303" key="7">
    <source>
    </source>
</evidence>
<evidence type="ECO:0000305" key="8"/>
<evidence type="ECO:0000312" key="9">
    <source>
        <dbReference type="PDB" id="3DIV"/>
    </source>
</evidence>
<evidence type="ECO:0007744" key="10">
    <source>
        <dbReference type="PDB" id="2H5U"/>
    </source>
</evidence>
<evidence type="ECO:0007744" key="11">
    <source>
        <dbReference type="PDB" id="3DIV"/>
    </source>
</evidence>
<evidence type="ECO:0007829" key="12">
    <source>
        <dbReference type="PDB" id="2H5U"/>
    </source>
</evidence>
<evidence type="ECO:0007829" key="13">
    <source>
        <dbReference type="PDB" id="3DIV"/>
    </source>
</evidence>
<organism>
    <name type="scientific">Trametes maxima</name>
    <name type="common">White-rot fungus</name>
    <name type="synonym">Cerrena maxima</name>
    <dbReference type="NCBI Taxonomy" id="259368"/>
    <lineage>
        <taxon>Eukaryota</taxon>
        <taxon>Fungi</taxon>
        <taxon>Dikarya</taxon>
        <taxon>Basidiomycota</taxon>
        <taxon>Agaricomycotina</taxon>
        <taxon>Agaricomycetes</taxon>
        <taxon>Polyporales</taxon>
        <taxon>Polyporaceae</taxon>
        <taxon>Trametes</taxon>
    </lineage>
</organism>
<feature type="chain" id="PRO_0000401149" description="Laccase">
    <location>
        <begin position="1"/>
        <end position="499"/>
    </location>
</feature>
<feature type="domain" description="Plastocyanin-like 1" evidence="2">
    <location>
        <begin position="2"/>
        <end position="127"/>
    </location>
</feature>
<feature type="domain" description="Plastocyanin-like 2" evidence="2">
    <location>
        <begin position="139"/>
        <end position="281"/>
    </location>
</feature>
<feature type="domain" description="Plastocyanin-like 3" evidence="2">
    <location>
        <begin position="348"/>
        <end position="470"/>
    </location>
</feature>
<feature type="binding site" description="type 2 copper site" evidence="3 5 10 11">
    <location>
        <position position="64"/>
    </location>
    <ligand>
        <name>Cu cation</name>
        <dbReference type="ChEBI" id="CHEBI:23378"/>
        <label>1</label>
    </ligand>
</feature>
<feature type="binding site" description="type 3 copper site" evidence="3 5 10 11">
    <location>
        <position position="66"/>
    </location>
    <ligand>
        <name>Cu cation</name>
        <dbReference type="ChEBI" id="CHEBI:23378"/>
        <label>2</label>
    </ligand>
</feature>
<feature type="binding site" description="type 3 copper site" evidence="3 5 10 11">
    <location>
        <position position="109"/>
    </location>
    <ligand>
        <name>Cu cation</name>
        <dbReference type="ChEBI" id="CHEBI:23378"/>
        <label>2</label>
    </ligand>
</feature>
<feature type="binding site" description="type 3 copper site" evidence="3 5 10 11">
    <location>
        <position position="111"/>
    </location>
    <ligand>
        <name>Cu cation</name>
        <dbReference type="ChEBI" id="CHEBI:23378"/>
        <label>3</label>
    </ligand>
</feature>
<feature type="binding site" description="type 1 copper site" evidence="3 5 10 11">
    <location>
        <position position="395"/>
    </location>
    <ligand>
        <name>Cu cation</name>
        <dbReference type="ChEBI" id="CHEBI:23378"/>
        <label>4</label>
    </ligand>
</feature>
<feature type="binding site" description="type 2 copper site" evidence="3 5 10 11">
    <location>
        <position position="398"/>
    </location>
    <ligand>
        <name>Cu cation</name>
        <dbReference type="ChEBI" id="CHEBI:23378"/>
        <label>1</label>
    </ligand>
</feature>
<feature type="binding site" description="type 3 copper site" evidence="3 5 10 11">
    <location>
        <position position="400"/>
    </location>
    <ligand>
        <name>Cu cation</name>
        <dbReference type="ChEBI" id="CHEBI:23378"/>
        <label>3</label>
    </ligand>
</feature>
<feature type="binding site" description="type 3 copper site" evidence="3 5 10 11">
    <location>
        <position position="452"/>
    </location>
    <ligand>
        <name>Cu cation</name>
        <dbReference type="ChEBI" id="CHEBI:23378"/>
        <label>3</label>
    </ligand>
</feature>
<feature type="binding site" description="type 1 copper site" evidence="3 5 10 11">
    <location>
        <position position="453"/>
    </location>
    <ligand>
        <name>Cu cation</name>
        <dbReference type="ChEBI" id="CHEBI:23378"/>
        <label>4</label>
    </ligand>
</feature>
<feature type="binding site" description="type 3 copper site" evidence="3 5 10 11">
    <location>
        <position position="454"/>
    </location>
    <ligand>
        <name>Cu cation</name>
        <dbReference type="ChEBI" id="CHEBI:23378"/>
        <label>2</label>
    </ligand>
</feature>
<feature type="binding site" description="type 1 copper site" evidence="3 5 10 11">
    <location>
        <position position="458"/>
    </location>
    <ligand>
        <name>Cu cation</name>
        <dbReference type="ChEBI" id="CHEBI:23378"/>
        <label>4</label>
    </ligand>
</feature>
<feature type="modified residue" description="3'-nitrotyrosine" evidence="3 4 5">
    <location>
        <position position="196"/>
    </location>
</feature>
<feature type="modified residue" description="3'-nitrotyrosine" evidence="3 4 5">
    <location>
        <position position="372"/>
    </location>
</feature>
<feature type="glycosylation site" description="N-linked (GlcNAc...) asparagine" evidence="2">
    <location>
        <position position="51"/>
    </location>
</feature>
<feature type="glycosylation site" description="N-linked (GlcNAc...) asparagine" evidence="3 4 5 10">
    <location>
        <position position="54"/>
    </location>
</feature>
<feature type="glycosylation site" description="N-linked (GlcNAc...) asparagine" evidence="2">
    <location>
        <position position="208"/>
    </location>
</feature>
<feature type="glycosylation site" description="N-linked (GlcNAc...) asparagine" evidence="3 4 5 10 11">
    <location>
        <position position="217"/>
    </location>
</feature>
<feature type="glycosylation site" description="N-linked (GlcNAc...) asparagine" evidence="2">
    <location>
        <position position="292"/>
    </location>
</feature>
<feature type="glycosylation site" description="N-linked (GlcNAc...) asparagine" evidence="3 10">
    <location>
        <position position="333"/>
    </location>
</feature>
<feature type="glycosylation site" description="N-linked (GlcNAc...) asparagine" evidence="2">
    <location>
        <position position="377"/>
    </location>
</feature>
<feature type="glycosylation site" description="N-linked (GlcNAc...) asparagine" evidence="2">
    <location>
        <position position="416"/>
    </location>
</feature>
<feature type="glycosylation site" description="N-linked (GlcNAc...) asparagine" evidence="3 4 10">
    <location>
        <position position="436"/>
    </location>
</feature>
<feature type="disulfide bond" evidence="3 4 10 11">
    <location>
        <begin position="85"/>
        <end position="488"/>
    </location>
</feature>
<feature type="disulfide bond" evidence="3 4 10 11">
    <location>
        <begin position="117"/>
        <end position="205"/>
    </location>
</feature>
<feature type="strand" evidence="13">
    <location>
        <begin position="4"/>
        <end position="15"/>
    </location>
</feature>
<feature type="strand" evidence="13">
    <location>
        <begin position="22"/>
        <end position="27"/>
    </location>
</feature>
<feature type="strand" evidence="13">
    <location>
        <begin position="30"/>
        <end position="32"/>
    </location>
</feature>
<feature type="strand" evidence="13">
    <location>
        <begin position="36"/>
        <end position="39"/>
    </location>
</feature>
<feature type="strand" evidence="13">
    <location>
        <begin position="43"/>
        <end position="50"/>
    </location>
</feature>
<feature type="helix" evidence="13">
    <location>
        <begin position="55"/>
        <end position="57"/>
    </location>
</feature>
<feature type="strand" evidence="13">
    <location>
        <begin position="63"/>
        <end position="66"/>
    </location>
</feature>
<feature type="helix" evidence="13">
    <location>
        <begin position="74"/>
        <end position="76"/>
    </location>
</feature>
<feature type="turn" evidence="13">
    <location>
        <begin position="80"/>
        <end position="82"/>
    </location>
</feature>
<feature type="strand" evidence="13">
    <location>
        <begin position="92"/>
        <end position="98"/>
    </location>
</feature>
<feature type="strand" evidence="13">
    <location>
        <begin position="104"/>
        <end position="110"/>
    </location>
</feature>
<feature type="helix" evidence="13">
    <location>
        <begin position="115"/>
        <end position="118"/>
    </location>
</feature>
<feature type="strand" evidence="13">
    <location>
        <begin position="121"/>
        <end position="127"/>
    </location>
</feature>
<feature type="helix" evidence="13">
    <location>
        <begin position="134"/>
        <end position="136"/>
    </location>
</feature>
<feature type="helix" evidence="13">
    <location>
        <begin position="142"/>
        <end position="144"/>
    </location>
</feature>
<feature type="strand" evidence="13">
    <location>
        <begin position="145"/>
        <end position="151"/>
    </location>
</feature>
<feature type="turn" evidence="13">
    <location>
        <begin position="156"/>
        <end position="158"/>
    </location>
</feature>
<feature type="strand" evidence="13">
    <location>
        <begin position="167"/>
        <end position="171"/>
    </location>
</feature>
<feature type="strand" evidence="13">
    <location>
        <begin position="187"/>
        <end position="190"/>
    </location>
</feature>
<feature type="strand" evidence="13">
    <location>
        <begin position="195"/>
        <end position="202"/>
    </location>
</feature>
<feature type="strand" evidence="13">
    <location>
        <begin position="209"/>
        <end position="213"/>
    </location>
</feature>
<feature type="strand" evidence="13">
    <location>
        <begin position="218"/>
        <end position="223"/>
    </location>
</feature>
<feature type="strand" evidence="13">
    <location>
        <begin position="226"/>
        <end position="238"/>
    </location>
</feature>
<feature type="strand" evidence="13">
    <location>
        <begin position="243"/>
        <end position="249"/>
    </location>
</feature>
<feature type="strand" evidence="13">
    <location>
        <begin position="254"/>
        <end position="267"/>
    </location>
</feature>
<feature type="helix" evidence="13">
    <location>
        <begin position="271"/>
        <end position="273"/>
    </location>
</feature>
<feature type="strand" evidence="13">
    <location>
        <begin position="276"/>
        <end position="281"/>
    </location>
</feature>
<feature type="strand" evidence="13">
    <location>
        <begin position="297"/>
        <end position="299"/>
    </location>
</feature>
<feature type="helix" evidence="13">
    <location>
        <begin position="302"/>
        <end position="304"/>
    </location>
</feature>
<feature type="strand" evidence="13">
    <location>
        <begin position="307"/>
        <end position="309"/>
    </location>
</feature>
<feature type="strand" evidence="13">
    <location>
        <begin position="322"/>
        <end position="327"/>
    </location>
</feature>
<feature type="strand" evidence="13">
    <location>
        <begin position="330"/>
        <end position="332"/>
    </location>
</feature>
<feature type="strand" evidence="13">
    <location>
        <begin position="337"/>
        <end position="339"/>
    </location>
</feature>
<feature type="helix" evidence="13">
    <location>
        <begin position="351"/>
        <end position="356"/>
    </location>
</feature>
<feature type="turn" evidence="13">
    <location>
        <begin position="362"/>
        <end position="364"/>
    </location>
</feature>
<feature type="strand" evidence="13">
    <location>
        <begin position="365"/>
        <end position="367"/>
    </location>
</feature>
<feature type="strand" evidence="13">
    <location>
        <begin position="370"/>
        <end position="374"/>
    </location>
</feature>
<feature type="strand" evidence="13">
    <location>
        <begin position="379"/>
        <end position="385"/>
    </location>
</feature>
<feature type="strand" evidence="13">
    <location>
        <begin position="396"/>
        <end position="399"/>
    </location>
</feature>
<feature type="strand" evidence="13">
    <location>
        <begin position="404"/>
        <end position="408"/>
    </location>
</feature>
<feature type="strand" evidence="12">
    <location>
        <begin position="417"/>
        <end position="419"/>
    </location>
</feature>
<feature type="strand" evidence="13">
    <location>
        <begin position="422"/>
        <end position="427"/>
    </location>
</feature>
<feature type="turn" evidence="13">
    <location>
        <begin position="431"/>
        <end position="434"/>
    </location>
</feature>
<feature type="strand" evidence="13">
    <location>
        <begin position="436"/>
        <end position="442"/>
    </location>
</feature>
<feature type="strand" evidence="13">
    <location>
        <begin position="447"/>
        <end position="455"/>
    </location>
</feature>
<feature type="helix" evidence="13">
    <location>
        <begin position="456"/>
        <end position="460"/>
    </location>
</feature>
<feature type="strand" evidence="13">
    <location>
        <begin position="464"/>
        <end position="470"/>
    </location>
</feature>
<feature type="helix" evidence="13">
    <location>
        <begin position="471"/>
        <end position="473"/>
    </location>
</feature>
<feature type="helix" evidence="13">
    <location>
        <begin position="474"/>
        <end position="477"/>
    </location>
</feature>
<feature type="helix" evidence="13">
    <location>
        <begin position="482"/>
        <end position="485"/>
    </location>
</feature>
<feature type="helix" evidence="13">
    <location>
        <begin position="487"/>
        <end position="492"/>
    </location>
</feature>
<feature type="helix" evidence="13">
    <location>
        <begin position="496"/>
        <end position="498"/>
    </location>
</feature>
<accession>D0VWU3</accession>
<protein>
    <recommendedName>
        <fullName evidence="6 7 9">Laccase</fullName>
        <ecNumber evidence="3 4">1.10.3.2</ecNumber>
    </recommendedName>
    <alternativeName>
        <fullName evidence="1">Benzenediol:oxygen oxidoreductase</fullName>
    </alternativeName>
    <alternativeName>
        <fullName evidence="1">Diphenol oxidase</fullName>
    </alternativeName>
    <alternativeName>
        <fullName evidence="1">Urishiol oxidase</fullName>
    </alternativeName>
</protein>